<dbReference type="EC" id="5.2.1.8" evidence="1"/>
<dbReference type="EMBL" id="BX571857">
    <property type="protein sequence ID" value="CAG43406.1"/>
    <property type="molecule type" value="Genomic_DNA"/>
</dbReference>
<dbReference type="RefSeq" id="WP_000127573.1">
    <property type="nucleotide sequence ID" value="NC_002953.3"/>
</dbReference>
<dbReference type="SMR" id="Q6G8Q0"/>
<dbReference type="KEGG" id="sas:SAS1604"/>
<dbReference type="HOGENOM" id="CLU_033058_3_2_9"/>
<dbReference type="GO" id="GO:0005737">
    <property type="term" value="C:cytoplasm"/>
    <property type="evidence" value="ECO:0007669"/>
    <property type="project" value="UniProtKB-SubCell"/>
</dbReference>
<dbReference type="GO" id="GO:0003755">
    <property type="term" value="F:peptidyl-prolyl cis-trans isomerase activity"/>
    <property type="evidence" value="ECO:0007669"/>
    <property type="project" value="UniProtKB-UniRule"/>
</dbReference>
<dbReference type="GO" id="GO:0044183">
    <property type="term" value="F:protein folding chaperone"/>
    <property type="evidence" value="ECO:0007669"/>
    <property type="project" value="TreeGrafter"/>
</dbReference>
<dbReference type="GO" id="GO:0043022">
    <property type="term" value="F:ribosome binding"/>
    <property type="evidence" value="ECO:0007669"/>
    <property type="project" value="TreeGrafter"/>
</dbReference>
<dbReference type="GO" id="GO:0051083">
    <property type="term" value="P:'de novo' cotranslational protein folding"/>
    <property type="evidence" value="ECO:0007669"/>
    <property type="project" value="TreeGrafter"/>
</dbReference>
<dbReference type="GO" id="GO:0051301">
    <property type="term" value="P:cell division"/>
    <property type="evidence" value="ECO:0007669"/>
    <property type="project" value="UniProtKB-KW"/>
</dbReference>
<dbReference type="GO" id="GO:0061077">
    <property type="term" value="P:chaperone-mediated protein folding"/>
    <property type="evidence" value="ECO:0007669"/>
    <property type="project" value="TreeGrafter"/>
</dbReference>
<dbReference type="GO" id="GO:0015031">
    <property type="term" value="P:protein transport"/>
    <property type="evidence" value="ECO:0007669"/>
    <property type="project" value="UniProtKB-UniRule"/>
</dbReference>
<dbReference type="GO" id="GO:0043335">
    <property type="term" value="P:protein unfolding"/>
    <property type="evidence" value="ECO:0007669"/>
    <property type="project" value="TreeGrafter"/>
</dbReference>
<dbReference type="FunFam" id="3.10.50.40:FF:000001">
    <property type="entry name" value="Trigger factor"/>
    <property type="match status" value="1"/>
</dbReference>
<dbReference type="FunFam" id="3.30.70.1050:FF:000002">
    <property type="entry name" value="Trigger factor"/>
    <property type="match status" value="1"/>
</dbReference>
<dbReference type="Gene3D" id="3.10.50.40">
    <property type="match status" value="1"/>
</dbReference>
<dbReference type="Gene3D" id="3.30.70.1050">
    <property type="entry name" value="Trigger factor ribosome-binding domain"/>
    <property type="match status" value="1"/>
</dbReference>
<dbReference type="Gene3D" id="1.10.3120.10">
    <property type="entry name" value="Trigger factor, C-terminal domain"/>
    <property type="match status" value="1"/>
</dbReference>
<dbReference type="HAMAP" id="MF_00303">
    <property type="entry name" value="Trigger_factor_Tig"/>
    <property type="match status" value="1"/>
</dbReference>
<dbReference type="InterPro" id="IPR046357">
    <property type="entry name" value="PPIase_dom_sf"/>
</dbReference>
<dbReference type="InterPro" id="IPR001179">
    <property type="entry name" value="PPIase_FKBP_dom"/>
</dbReference>
<dbReference type="InterPro" id="IPR005215">
    <property type="entry name" value="Trig_fac"/>
</dbReference>
<dbReference type="InterPro" id="IPR008880">
    <property type="entry name" value="Trigger_fac_C"/>
</dbReference>
<dbReference type="InterPro" id="IPR037041">
    <property type="entry name" value="Trigger_fac_C_sf"/>
</dbReference>
<dbReference type="InterPro" id="IPR008881">
    <property type="entry name" value="Trigger_fac_ribosome-bd_bac"/>
</dbReference>
<dbReference type="InterPro" id="IPR036611">
    <property type="entry name" value="Trigger_fac_ribosome-bd_sf"/>
</dbReference>
<dbReference type="InterPro" id="IPR027304">
    <property type="entry name" value="Trigger_fact/SurA_dom_sf"/>
</dbReference>
<dbReference type="NCBIfam" id="TIGR00115">
    <property type="entry name" value="tig"/>
    <property type="match status" value="1"/>
</dbReference>
<dbReference type="PANTHER" id="PTHR30560">
    <property type="entry name" value="TRIGGER FACTOR CHAPERONE AND PEPTIDYL-PROLYL CIS/TRANS ISOMERASE"/>
    <property type="match status" value="1"/>
</dbReference>
<dbReference type="PANTHER" id="PTHR30560:SF3">
    <property type="entry name" value="TRIGGER FACTOR-LIKE PROTEIN TIG, CHLOROPLASTIC"/>
    <property type="match status" value="1"/>
</dbReference>
<dbReference type="Pfam" id="PF00254">
    <property type="entry name" value="FKBP_C"/>
    <property type="match status" value="1"/>
</dbReference>
<dbReference type="Pfam" id="PF05698">
    <property type="entry name" value="Trigger_C"/>
    <property type="match status" value="1"/>
</dbReference>
<dbReference type="Pfam" id="PF05697">
    <property type="entry name" value="Trigger_N"/>
    <property type="match status" value="1"/>
</dbReference>
<dbReference type="PIRSF" id="PIRSF003095">
    <property type="entry name" value="Trigger_factor"/>
    <property type="match status" value="1"/>
</dbReference>
<dbReference type="SUPFAM" id="SSF54534">
    <property type="entry name" value="FKBP-like"/>
    <property type="match status" value="1"/>
</dbReference>
<dbReference type="SUPFAM" id="SSF109998">
    <property type="entry name" value="Triger factor/SurA peptide-binding domain-like"/>
    <property type="match status" value="1"/>
</dbReference>
<dbReference type="SUPFAM" id="SSF102735">
    <property type="entry name" value="Trigger factor ribosome-binding domain"/>
    <property type="match status" value="1"/>
</dbReference>
<dbReference type="PROSITE" id="PS50059">
    <property type="entry name" value="FKBP_PPIASE"/>
    <property type="match status" value="1"/>
</dbReference>
<name>TIG_STAAS</name>
<keyword id="KW-0131">Cell cycle</keyword>
<keyword id="KW-0132">Cell division</keyword>
<keyword id="KW-0143">Chaperone</keyword>
<keyword id="KW-0963">Cytoplasm</keyword>
<keyword id="KW-0413">Isomerase</keyword>
<keyword id="KW-0697">Rotamase</keyword>
<comment type="function">
    <text evidence="1">Involved in protein export. Acts as a chaperone by maintaining the newly synthesized protein in an open conformation. Functions as a peptidyl-prolyl cis-trans isomerase.</text>
</comment>
<comment type="catalytic activity">
    <reaction evidence="1">
        <text>[protein]-peptidylproline (omega=180) = [protein]-peptidylproline (omega=0)</text>
        <dbReference type="Rhea" id="RHEA:16237"/>
        <dbReference type="Rhea" id="RHEA-COMP:10747"/>
        <dbReference type="Rhea" id="RHEA-COMP:10748"/>
        <dbReference type="ChEBI" id="CHEBI:83833"/>
        <dbReference type="ChEBI" id="CHEBI:83834"/>
        <dbReference type="EC" id="5.2.1.8"/>
    </reaction>
</comment>
<comment type="subcellular location">
    <subcellularLocation>
        <location>Cytoplasm</location>
    </subcellularLocation>
    <text evidence="1">About half TF is bound to the ribosome near the polypeptide exit tunnel while the other half is free in the cytoplasm.</text>
</comment>
<comment type="domain">
    <text evidence="1">Consists of 3 domains; the N-terminus binds the ribosome, the middle domain has PPIase activity, while the C-terminus has intrinsic chaperone activity on its own.</text>
</comment>
<comment type="similarity">
    <text evidence="1">Belongs to the FKBP-type PPIase family. Tig subfamily.</text>
</comment>
<organism>
    <name type="scientific">Staphylococcus aureus (strain MSSA476)</name>
    <dbReference type="NCBI Taxonomy" id="282459"/>
    <lineage>
        <taxon>Bacteria</taxon>
        <taxon>Bacillati</taxon>
        <taxon>Bacillota</taxon>
        <taxon>Bacilli</taxon>
        <taxon>Bacillales</taxon>
        <taxon>Staphylococcaceae</taxon>
        <taxon>Staphylococcus</taxon>
    </lineage>
</organism>
<gene>
    <name evidence="1" type="primary">tig</name>
    <name type="ordered locus">SAS1604</name>
</gene>
<protein>
    <recommendedName>
        <fullName evidence="1">Trigger factor</fullName>
        <shortName evidence="1">TF</shortName>
        <ecNumber evidence="1">5.2.1.8</ecNumber>
    </recommendedName>
    <alternativeName>
        <fullName evidence="1">PPIase</fullName>
    </alternativeName>
</protein>
<accession>Q6G8Q0</accession>
<sequence length="433" mass="48609">MTATWEKKEGNEGLLTVTVPAEKVNKALDQAFKKVVKQINVPGFRKGKVPRPIFEQRFGVEALYQDAIDILLPDAYGEAIDETDIKPVAQPEVSVTQIEKGKDFIFEATVTVEPEVKLGDYKGLEIEKQETELSDDELQEAIDHSLGHLAEMVVKEDGVVENGDTVNIDFSGSVDGEEFEGGQAEGYDLEIGSGSFIPGFEEQLEGMKVDEEKDVVVTFPEEYHAEELAGKEATFKTKVNEIKFKEVPELTDEIANELDAEANTVDEYKENLRKRLAEQKATDAENVEKEEAITKATDNTTIDIPEAMVNTELDRMVSEFAQRIQQQGLDLQTYFQISGQDETQLREQMKDDAEQRVKTNLTLTAIAEAEKIEATDEDIDKELEKMSKQFNISVEDIKNTLGNTDIIKNDVRIQKVIDLLRDNAKFVEGTKED</sequence>
<evidence type="ECO:0000255" key="1">
    <source>
        <dbReference type="HAMAP-Rule" id="MF_00303"/>
    </source>
</evidence>
<proteinExistence type="inferred from homology"/>
<feature type="chain" id="PRO_0000179429" description="Trigger factor">
    <location>
        <begin position="1"/>
        <end position="433"/>
    </location>
</feature>
<feature type="domain" description="PPIase FKBP-type" evidence="1">
    <location>
        <begin position="163"/>
        <end position="248"/>
    </location>
</feature>
<reference key="1">
    <citation type="journal article" date="2004" name="Proc. Natl. Acad. Sci. U.S.A.">
        <title>Complete genomes of two clinical Staphylococcus aureus strains: evidence for the rapid evolution of virulence and drug resistance.</title>
        <authorList>
            <person name="Holden M.T.G."/>
            <person name="Feil E.J."/>
            <person name="Lindsay J.A."/>
            <person name="Peacock S.J."/>
            <person name="Day N.P.J."/>
            <person name="Enright M.C."/>
            <person name="Foster T.J."/>
            <person name="Moore C.E."/>
            <person name="Hurst L."/>
            <person name="Atkin R."/>
            <person name="Barron A."/>
            <person name="Bason N."/>
            <person name="Bentley S.D."/>
            <person name="Chillingworth C."/>
            <person name="Chillingworth T."/>
            <person name="Churcher C."/>
            <person name="Clark L."/>
            <person name="Corton C."/>
            <person name="Cronin A."/>
            <person name="Doggett J."/>
            <person name="Dowd L."/>
            <person name="Feltwell T."/>
            <person name="Hance Z."/>
            <person name="Harris B."/>
            <person name="Hauser H."/>
            <person name="Holroyd S."/>
            <person name="Jagels K."/>
            <person name="James K.D."/>
            <person name="Lennard N."/>
            <person name="Line A."/>
            <person name="Mayes R."/>
            <person name="Moule S."/>
            <person name="Mungall K."/>
            <person name="Ormond D."/>
            <person name="Quail M.A."/>
            <person name="Rabbinowitsch E."/>
            <person name="Rutherford K.M."/>
            <person name="Sanders M."/>
            <person name="Sharp S."/>
            <person name="Simmonds M."/>
            <person name="Stevens K."/>
            <person name="Whitehead S."/>
            <person name="Barrell B.G."/>
            <person name="Spratt B.G."/>
            <person name="Parkhill J."/>
        </authorList>
    </citation>
    <scope>NUCLEOTIDE SEQUENCE [LARGE SCALE GENOMIC DNA]</scope>
    <source>
        <strain>MSSA476</strain>
    </source>
</reference>